<sequence length="126" mass="14691">MVRSKFKDEHPFDKRKAEAERIRQKYQDRIPVICEKAEKSDIPTIDKKKYLVPADLTVGQFVYVIRKRIKLAPEKAIFIFVDDILPPTAALMSSIYDEHKDEDGFLYVLYASENTFGDLEQYAISE</sequence>
<comment type="function">
    <text evidence="1">Ubiquitin-like modifier involved in autophagosome formation. With ATG4, mediates the delivery of the autophagosomes to the vacuole via the microtubule cytoskeleton. Required for selective autophagic degradation of the nucleus (nucleophagy) as well as for mitophagy which contributes to regulate mitochondrial quantity and quality by eliminating the mitochondria to a basal level to fulfill cellular energy requirements and preventing excess ROS production. Participates also in membrane fusion events that take place in the early secretory pathway. Also involved in endoplasmic reticulum-specific autophagic process and is essential for the survival of cells subjected to severe ER stress. The ATG8-PE conjugate mediates tethering between adjacent membranes and stimulates membrane hemifusion, leading to expansion of the autophagosomal membrane during autophagy.</text>
</comment>
<comment type="subcellular location">
    <subcellularLocation>
        <location evidence="1">Cytoplasmic vesicle</location>
        <location evidence="1">Autophagosome membrane</location>
        <topology evidence="1">Lipid-anchor</topology>
    </subcellularLocation>
    <subcellularLocation>
        <location evidence="1">Vacuole membrane</location>
        <topology evidence="1">Lipid-anchor</topology>
    </subcellularLocation>
</comment>
<comment type="PTM">
    <text evidence="1">The C-terminal 9 residues are removed to expose Gly-117 at the C-terminus. The C-terminal Gly is then amidated with phosphatidylethanolamine by an activating system similar to that for ubiquitin.</text>
</comment>
<comment type="similarity">
    <text evidence="3">Belongs to the ATG8 family.</text>
</comment>
<keyword id="KW-0072">Autophagy</keyword>
<keyword id="KW-0968">Cytoplasmic vesicle</keyword>
<keyword id="KW-0449">Lipoprotein</keyword>
<keyword id="KW-0472">Membrane</keyword>
<keyword id="KW-0653">Protein transport</keyword>
<keyword id="KW-0813">Transport</keyword>
<keyword id="KW-0833">Ubl conjugation pathway</keyword>
<keyword id="KW-0926">Vacuole</keyword>
<gene>
    <name type="primary">ATG8</name>
    <name type="ordered locus">CNBA7760</name>
</gene>
<dbReference type="EMBL" id="AAEY01000005">
    <property type="protein sequence ID" value="EAL23009.1"/>
    <property type="molecule type" value="Genomic_DNA"/>
</dbReference>
<dbReference type="RefSeq" id="XP_777656.1">
    <property type="nucleotide sequence ID" value="XM_772563.1"/>
</dbReference>
<dbReference type="SMR" id="P0CO55"/>
<dbReference type="EnsemblFungi" id="AAW41320">
    <property type="protein sequence ID" value="AAW41320"/>
    <property type="gene ID" value="CNA07930"/>
</dbReference>
<dbReference type="GeneID" id="4934042"/>
<dbReference type="KEGG" id="cnb:CNBA7760"/>
<dbReference type="VEuPathDB" id="FungiDB:CNBA7760"/>
<dbReference type="HOGENOM" id="CLU_119276_0_1_1"/>
<dbReference type="GO" id="GO:0000421">
    <property type="term" value="C:autophagosome membrane"/>
    <property type="evidence" value="ECO:0007669"/>
    <property type="project" value="UniProtKB-SubCell"/>
</dbReference>
<dbReference type="GO" id="GO:0031410">
    <property type="term" value="C:cytoplasmic vesicle"/>
    <property type="evidence" value="ECO:0007669"/>
    <property type="project" value="UniProtKB-KW"/>
</dbReference>
<dbReference type="GO" id="GO:0006914">
    <property type="term" value="P:autophagy"/>
    <property type="evidence" value="ECO:0007669"/>
    <property type="project" value="UniProtKB-KW"/>
</dbReference>
<dbReference type="GO" id="GO:0015031">
    <property type="term" value="P:protein transport"/>
    <property type="evidence" value="ECO:0007669"/>
    <property type="project" value="UniProtKB-KW"/>
</dbReference>
<dbReference type="CDD" id="cd16128">
    <property type="entry name" value="Ubl_ATG8"/>
    <property type="match status" value="1"/>
</dbReference>
<dbReference type="FunFam" id="3.10.20.90:FF:000010">
    <property type="entry name" value="Autophagy-related protein"/>
    <property type="match status" value="1"/>
</dbReference>
<dbReference type="Gene3D" id="3.10.20.90">
    <property type="entry name" value="Phosphatidylinositol 3-kinase Catalytic Subunit, Chain A, domain 1"/>
    <property type="match status" value="1"/>
</dbReference>
<dbReference type="InterPro" id="IPR004241">
    <property type="entry name" value="Atg8-like"/>
</dbReference>
<dbReference type="InterPro" id="IPR029071">
    <property type="entry name" value="Ubiquitin-like_domsf"/>
</dbReference>
<dbReference type="PANTHER" id="PTHR10969">
    <property type="entry name" value="MICROTUBULE-ASSOCIATED PROTEINS 1A/1B LIGHT CHAIN 3-RELATED"/>
    <property type="match status" value="1"/>
</dbReference>
<dbReference type="Pfam" id="PF02991">
    <property type="entry name" value="ATG8"/>
    <property type="match status" value="1"/>
</dbReference>
<dbReference type="SUPFAM" id="SSF54236">
    <property type="entry name" value="Ubiquitin-like"/>
    <property type="match status" value="1"/>
</dbReference>
<feature type="chain" id="PRO_0000410132" description="Autophagy-related protein 8">
    <location>
        <begin position="1"/>
        <end position="117"/>
    </location>
</feature>
<feature type="propeptide" id="PRO_0000410133" description="Removed in mature form" evidence="1">
    <location>
        <begin position="118"/>
        <end position="126"/>
    </location>
</feature>
<feature type="region of interest" description="Disordered" evidence="2">
    <location>
        <begin position="1"/>
        <end position="20"/>
    </location>
</feature>
<feature type="site" description="Cleavage; by ATG4" evidence="1">
    <location>
        <begin position="117"/>
        <end position="118"/>
    </location>
</feature>
<feature type="lipid moiety-binding region" description="Phosphatidylethanolamine amidated glycine" evidence="1">
    <location>
        <position position="117"/>
    </location>
</feature>
<proteinExistence type="inferred from homology"/>
<reference key="1">
    <citation type="journal article" date="2005" name="Science">
        <title>The genome of the basidiomycetous yeast and human pathogen Cryptococcus neoformans.</title>
        <authorList>
            <person name="Loftus B.J."/>
            <person name="Fung E."/>
            <person name="Roncaglia P."/>
            <person name="Rowley D."/>
            <person name="Amedeo P."/>
            <person name="Bruno D."/>
            <person name="Vamathevan J."/>
            <person name="Miranda M."/>
            <person name="Anderson I.J."/>
            <person name="Fraser J.A."/>
            <person name="Allen J.E."/>
            <person name="Bosdet I.E."/>
            <person name="Brent M.R."/>
            <person name="Chiu R."/>
            <person name="Doering T.L."/>
            <person name="Donlin M.J."/>
            <person name="D'Souza C.A."/>
            <person name="Fox D.S."/>
            <person name="Grinberg V."/>
            <person name="Fu J."/>
            <person name="Fukushima M."/>
            <person name="Haas B.J."/>
            <person name="Huang J.C."/>
            <person name="Janbon G."/>
            <person name="Jones S.J.M."/>
            <person name="Koo H.L."/>
            <person name="Krzywinski M.I."/>
            <person name="Kwon-Chung K.J."/>
            <person name="Lengeler K.B."/>
            <person name="Maiti R."/>
            <person name="Marra M.A."/>
            <person name="Marra R.E."/>
            <person name="Mathewson C.A."/>
            <person name="Mitchell T.G."/>
            <person name="Pertea M."/>
            <person name="Riggs F.R."/>
            <person name="Salzberg S.L."/>
            <person name="Schein J.E."/>
            <person name="Shvartsbeyn A."/>
            <person name="Shin H."/>
            <person name="Shumway M."/>
            <person name="Specht C.A."/>
            <person name="Suh B.B."/>
            <person name="Tenney A."/>
            <person name="Utterback T.R."/>
            <person name="Wickes B.L."/>
            <person name="Wortman J.R."/>
            <person name="Wye N.H."/>
            <person name="Kronstad J.W."/>
            <person name="Lodge J.K."/>
            <person name="Heitman J."/>
            <person name="Davis R.W."/>
            <person name="Fraser C.M."/>
            <person name="Hyman R.W."/>
        </authorList>
    </citation>
    <scope>NUCLEOTIDE SEQUENCE [LARGE SCALE GENOMIC DNA]</scope>
    <source>
        <strain>B-3501A</strain>
    </source>
</reference>
<name>ATG8_CRYNB</name>
<evidence type="ECO:0000250" key="1">
    <source>
        <dbReference type="UniProtKB" id="P38182"/>
    </source>
</evidence>
<evidence type="ECO:0000256" key="2">
    <source>
        <dbReference type="SAM" id="MobiDB-lite"/>
    </source>
</evidence>
<evidence type="ECO:0000305" key="3"/>
<protein>
    <recommendedName>
        <fullName>Autophagy-related protein 8</fullName>
    </recommendedName>
    <alternativeName>
        <fullName>Autophagy-related ubiquitin-like modifier ATG8</fullName>
    </alternativeName>
</protein>
<accession>P0CO55</accession>
<accession>Q55YQ9</accession>
<accession>Q5KN30</accession>
<organism>
    <name type="scientific">Cryptococcus neoformans var. neoformans serotype D (strain B-3501A)</name>
    <name type="common">Filobasidiella neoformans</name>
    <dbReference type="NCBI Taxonomy" id="283643"/>
    <lineage>
        <taxon>Eukaryota</taxon>
        <taxon>Fungi</taxon>
        <taxon>Dikarya</taxon>
        <taxon>Basidiomycota</taxon>
        <taxon>Agaricomycotina</taxon>
        <taxon>Tremellomycetes</taxon>
        <taxon>Tremellales</taxon>
        <taxon>Cryptococcaceae</taxon>
        <taxon>Cryptococcus</taxon>
        <taxon>Cryptococcus neoformans species complex</taxon>
    </lineage>
</organism>